<name>SUFA_ECOLI</name>
<keyword id="KW-0001">2Fe-2S</keyword>
<keyword id="KW-0002">3D-structure</keyword>
<keyword id="KW-0004">4Fe-4S</keyword>
<keyword id="KW-0408">Iron</keyword>
<keyword id="KW-0411">Iron-sulfur</keyword>
<keyword id="KW-0479">Metal-binding</keyword>
<keyword id="KW-1185">Reference proteome</keyword>
<evidence type="ECO:0000269" key="1">
    <source>
    </source>
</evidence>
<evidence type="ECO:0000269" key="2">
    <source>
    </source>
</evidence>
<evidence type="ECO:0000269" key="3">
    <source>
    </source>
</evidence>
<evidence type="ECO:0000269" key="4">
    <source>
    </source>
</evidence>
<evidence type="ECO:0000269" key="5">
    <source>
    </source>
</evidence>
<evidence type="ECO:0000269" key="6">
    <source>
    </source>
</evidence>
<evidence type="ECO:0000305" key="7"/>
<evidence type="ECO:0000305" key="8">
    <source>
    </source>
</evidence>
<evidence type="ECO:0000305" key="9">
    <source>
    </source>
</evidence>
<evidence type="ECO:0007744" key="10">
    <source>
        <dbReference type="PDB" id="2D2A"/>
    </source>
</evidence>
<evidence type="ECO:0007829" key="11">
    <source>
        <dbReference type="PDB" id="2D2A"/>
    </source>
</evidence>
<sequence>MDMHSGTFNPQDFAWQGLTLTPAAAIHIRELVAKQPGMVGVRLGVKQTGCAGFGYVLDSVSEPDKDDLLFEHDGAKLFVPLQAMPFIDGTEVDFVREGLNQIFKFHNPKAQNECGCGESFGV</sequence>
<accession>P77667</accession>
<feature type="chain" id="PRO_0000076987" description="Iron-sulfur cluster assembly protein SufA">
    <location>
        <begin position="1"/>
        <end position="122"/>
    </location>
</feature>
<feature type="binding site" description="sulfuration is probably achieved via an internal sulfur transfer from C-114 or C-116" evidence="2">
    <location>
        <position position="50"/>
    </location>
    <ligand>
        <name>[2Fe-2S] cluster</name>
        <dbReference type="ChEBI" id="CHEBI:190135"/>
    </ligand>
</feature>
<feature type="binding site" description="sulfuration is probably achieved via an internal sulfur transfer from C-114 or C-116" evidence="2">
    <location>
        <position position="50"/>
    </location>
    <ligand>
        <name>[4Fe-4S] cluster</name>
        <dbReference type="ChEBI" id="CHEBI:49883"/>
    </ligand>
</feature>
<feature type="binding site" evidence="8 9">
    <location>
        <position position="114"/>
    </location>
    <ligand>
        <name>[2Fe-2S] cluster</name>
        <dbReference type="ChEBI" id="CHEBI:190135"/>
    </ligand>
</feature>
<feature type="binding site" evidence="2">
    <location>
        <position position="114"/>
    </location>
    <ligand>
        <name>[4Fe-4S] cluster</name>
        <dbReference type="ChEBI" id="CHEBI:49883"/>
    </ligand>
</feature>
<feature type="binding site" evidence="8 9">
    <location>
        <position position="116"/>
    </location>
    <ligand>
        <name>[2Fe-2S] cluster</name>
        <dbReference type="ChEBI" id="CHEBI:190135"/>
    </ligand>
</feature>
<feature type="binding site" evidence="2">
    <location>
        <position position="116"/>
    </location>
    <ligand>
        <name>[4Fe-4S] cluster</name>
        <dbReference type="ChEBI" id="CHEBI:49883"/>
    </ligand>
</feature>
<feature type="mutagenesis site" description="Decrease of sulfur binding activity." evidence="2">
    <original>C</original>
    <variation>S</variation>
    <location>
        <position position="50"/>
    </location>
</feature>
<feature type="mutagenesis site" description="Strong decrease of sulfur binding activity." evidence="2">
    <original>C</original>
    <variation>S</variation>
    <location>
        <position position="114"/>
    </location>
</feature>
<feature type="mutagenesis site" description="Strong decrease of sulfur binding activity." evidence="2">
    <original>C</original>
    <variation>S</variation>
    <location>
        <position position="116"/>
    </location>
</feature>
<feature type="helix" evidence="11">
    <location>
        <begin position="22"/>
        <end position="34"/>
    </location>
</feature>
<feature type="strand" evidence="11">
    <location>
        <begin position="40"/>
        <end position="48"/>
    </location>
</feature>
<feature type="turn" evidence="11">
    <location>
        <begin position="49"/>
        <end position="51"/>
    </location>
</feature>
<feature type="strand" evidence="11">
    <location>
        <begin position="52"/>
        <end position="62"/>
    </location>
</feature>
<feature type="strand" evidence="11">
    <location>
        <begin position="67"/>
        <end position="72"/>
    </location>
</feature>
<feature type="strand" evidence="11">
    <location>
        <begin position="75"/>
        <end position="80"/>
    </location>
</feature>
<feature type="helix" evidence="11">
    <location>
        <begin position="81"/>
        <end position="83"/>
    </location>
</feature>
<feature type="helix" evidence="11">
    <location>
        <begin position="84"/>
        <end position="87"/>
    </location>
</feature>
<feature type="strand" evidence="11">
    <location>
        <begin position="91"/>
        <end position="97"/>
    </location>
</feature>
<feature type="strand" evidence="11">
    <location>
        <begin position="100"/>
        <end position="106"/>
    </location>
</feature>
<feature type="strand" evidence="11">
    <location>
        <begin position="119"/>
        <end position="121"/>
    </location>
</feature>
<organism>
    <name type="scientific">Escherichia coli (strain K12)</name>
    <dbReference type="NCBI Taxonomy" id="83333"/>
    <lineage>
        <taxon>Bacteria</taxon>
        <taxon>Pseudomonadati</taxon>
        <taxon>Pseudomonadota</taxon>
        <taxon>Gammaproteobacteria</taxon>
        <taxon>Enterobacterales</taxon>
        <taxon>Enterobacteriaceae</taxon>
        <taxon>Escherichia</taxon>
    </lineage>
</organism>
<reference key="1">
    <citation type="journal article" date="1996" name="DNA Res.">
        <title>A 570-kb DNA sequence of the Escherichia coli K-12 genome corresponding to the 28.0-40.1 min region on the linkage map.</title>
        <authorList>
            <person name="Aiba H."/>
            <person name="Baba T."/>
            <person name="Fujita K."/>
            <person name="Hayashi K."/>
            <person name="Inada T."/>
            <person name="Isono K."/>
            <person name="Itoh T."/>
            <person name="Kasai H."/>
            <person name="Kashimoto K."/>
            <person name="Kimura S."/>
            <person name="Kitakawa M."/>
            <person name="Kitagawa M."/>
            <person name="Makino K."/>
            <person name="Miki T."/>
            <person name="Mizobuchi K."/>
            <person name="Mori H."/>
            <person name="Mori T."/>
            <person name="Motomura K."/>
            <person name="Nakade S."/>
            <person name="Nakamura Y."/>
            <person name="Nashimoto H."/>
            <person name="Nishio Y."/>
            <person name="Oshima T."/>
            <person name="Saito N."/>
            <person name="Sampei G."/>
            <person name="Seki Y."/>
            <person name="Sivasundaram S."/>
            <person name="Tagami H."/>
            <person name="Takeda J."/>
            <person name="Takemoto K."/>
            <person name="Takeuchi Y."/>
            <person name="Wada C."/>
            <person name="Yamamoto Y."/>
            <person name="Horiuchi T."/>
        </authorList>
    </citation>
    <scope>NUCLEOTIDE SEQUENCE [LARGE SCALE GENOMIC DNA]</scope>
    <source>
        <strain>K12 / W3110 / ATCC 27325 / DSM 5911</strain>
    </source>
</reference>
<reference key="2">
    <citation type="journal article" date="1997" name="Science">
        <title>The complete genome sequence of Escherichia coli K-12.</title>
        <authorList>
            <person name="Blattner F.R."/>
            <person name="Plunkett G. III"/>
            <person name="Bloch C.A."/>
            <person name="Perna N.T."/>
            <person name="Burland V."/>
            <person name="Riley M."/>
            <person name="Collado-Vides J."/>
            <person name="Glasner J.D."/>
            <person name="Rode C.K."/>
            <person name="Mayhew G.F."/>
            <person name="Gregor J."/>
            <person name="Davis N.W."/>
            <person name="Kirkpatrick H.A."/>
            <person name="Goeden M.A."/>
            <person name="Rose D.J."/>
            <person name="Mau B."/>
            <person name="Shao Y."/>
        </authorList>
    </citation>
    <scope>NUCLEOTIDE SEQUENCE [LARGE SCALE GENOMIC DNA]</scope>
    <source>
        <strain>K12 / MG1655 / ATCC 47076</strain>
    </source>
</reference>
<reference key="3">
    <citation type="journal article" date="2006" name="Mol. Syst. Biol.">
        <title>Highly accurate genome sequences of Escherichia coli K-12 strains MG1655 and W3110.</title>
        <authorList>
            <person name="Hayashi K."/>
            <person name="Morooka N."/>
            <person name="Yamamoto Y."/>
            <person name="Fujita K."/>
            <person name="Isono K."/>
            <person name="Choi S."/>
            <person name="Ohtsubo E."/>
            <person name="Baba T."/>
            <person name="Wanner B.L."/>
            <person name="Mori H."/>
            <person name="Horiuchi T."/>
        </authorList>
    </citation>
    <scope>NUCLEOTIDE SEQUENCE [LARGE SCALE GENOMIC DNA]</scope>
    <source>
        <strain>K12 / W3110 / ATCC 27325 / DSM 5911</strain>
    </source>
</reference>
<reference key="4">
    <citation type="journal article" date="1999" name="J. Bacteriol.">
        <title>SufS is a NifS-like protein, and SufD is necessary for stability of the 2Fe-2S FhuF protein in Escherichia coli.</title>
        <authorList>
            <person name="Patzer S.I."/>
            <person name="Hantke K."/>
        </authorList>
    </citation>
    <scope>GENE NAME</scope>
    <source>
        <strain>K12 / MG1655 / ATCC 47076</strain>
    </source>
</reference>
<reference key="5">
    <citation type="journal article" date="2007" name="FEBS Lett.">
        <title>The SUF iron-sulfur cluster biosynthetic machinery: sulfur transfer from the SUFS-SUFE complex to SUFA.</title>
        <authorList>
            <person name="Sendra M."/>
            <person name="Ollagnier de Choudens S."/>
            <person name="Lascoux D."/>
            <person name="Sanakis Y."/>
            <person name="Fontecave M."/>
        </authorList>
    </citation>
    <scope>FUNCTION</scope>
    <scope>MUTAGENESIS OF CYS-50; CYS-114 AND CYS-116</scope>
    <scope>SULFUR-BINDING</scope>
</reference>
<reference key="6">
    <citation type="journal article" date="2008" name="Biochem. J.">
        <title>Complementary roles of SufA and IscA in the biogenesis of iron-sulfur clusters in Escherichia coli.</title>
        <authorList>
            <person name="Lu J."/>
            <person name="Yang J."/>
            <person name="Tan G."/>
            <person name="Ding H."/>
        </authorList>
    </citation>
    <scope>FUNCTION</scope>
    <scope>DISRUPTION PHENOTYPE</scope>
</reference>
<reference key="7">
    <citation type="journal article" date="2009" name="J. Am. Chem. Soc.">
        <title>Native Escherichia coli SufA, coexpressed with SufBCDSE, purifies as a [2Fe-2S] protein and acts as an Fe-S transporter to Fe-S target enzymes.</title>
        <authorList>
            <person name="Gupta V."/>
            <person name="Sendra M."/>
            <person name="Naik S.G."/>
            <person name="Chahal H.K."/>
            <person name="Huynh B.H."/>
            <person name="Outten F.W."/>
            <person name="Fontecave M."/>
            <person name="Ollagnier de Choudens S."/>
        </authorList>
    </citation>
    <scope>FUNCTION</scope>
</reference>
<reference key="8">
    <citation type="journal article" date="2009" name="Biochemistry">
        <title>The SufBCD Fe-S scaffold complex interacts with SufA for Fe-S cluster transfer.</title>
        <authorList>
            <person name="Chahal H.K."/>
            <person name="Dai Y."/>
            <person name="Saini A."/>
            <person name="Ayala-Castro C."/>
            <person name="Outten F.W."/>
        </authorList>
    </citation>
    <scope>FUNCTION</scope>
    <scope>INTERACTION WITH SUFB AND SUFC</scope>
</reference>
<reference key="9">
    <citation type="journal article" date="2012" name="J. Inorg. Biochem.">
        <title>Separate FeS scaffold and carrier functions for SufB(2)C(2) and SufA during in vitro maturation of [2Fe2S] Fdx.</title>
        <authorList>
            <person name="Chahal H.K."/>
            <person name="Outten F.W."/>
        </authorList>
    </citation>
    <scope>FUNCTION</scope>
</reference>
<reference evidence="10" key="10">
    <citation type="journal article" date="2005" name="FEBS Lett.">
        <title>Crystal structure of Escherichia coli SufA involved in biosynthesis of iron-sulfur clusters: implications for a functional dimer.</title>
        <authorList>
            <person name="Wada K."/>
            <person name="Hasegawa Y."/>
            <person name="Gong Z."/>
            <person name="Minami Y."/>
            <person name="Fukuyama K."/>
            <person name="Takahashi Y."/>
        </authorList>
    </citation>
    <scope>X-RAY CRYSTALLOGRAPHY (2.70 ANGSTROMS)</scope>
    <scope>SUBUNIT</scope>
    <source>
        <strain>K12 / MG1655 / ATCC 47076</strain>
    </source>
</reference>
<comment type="function">
    <text evidence="2 3 4 5 6">Member of gene cluster sufABCDSE that mediates iron-sulfur cluster assembly under oxidative stress and iron limitation conditions (PubMed:17941825). Binds [2Fe-2S] and [4Fe-4S] clusters by mobilizing sulfur atoms provided by the SufS-SufE cysteine desulfurase system and then transfers the assembled Fe-S clusters to target proteins including ferredoxin and aconitase (PubMed:17350000, PubMed:19366265). Seems to act as a Fe-S cluster carrier rather than a scaffold, this role being performed by SufB and SufC (PubMed:19810706, PubMed:23018275).</text>
</comment>
<comment type="subunit">
    <text evidence="1 5">Homodimer (PubMed:16298366). Interacts with SufB and SufC (PubMed:19810706).</text>
</comment>
<comment type="interaction">
    <interactant intactId="EBI-1125011">
        <id>P77667</id>
    </interactant>
    <interactant intactId="EBI-562758">
        <id>P77522</id>
        <label>sufB</label>
    </interactant>
    <organismsDiffer>false</organismsDiffer>
    <experiments>5</experiments>
</comment>
<comment type="interaction">
    <interactant intactId="EBI-1125011">
        <id>P77667</id>
    </interactant>
    <interactant intactId="EBI-561601">
        <id>P77499</id>
        <label>sufC</label>
    </interactant>
    <organismsDiffer>false</organismsDiffer>
    <experiments>5</experiments>
</comment>
<comment type="disruption phenotype">
    <text evidence="3">Deletion has only a mild effect on cell growth (PubMed:17941825). However, deletion of both IscA and SufA results in a severe growth phenotype in minimal medium under aerobic growth conditions (PubMed:17941825).</text>
</comment>
<comment type="similarity">
    <text evidence="7">Belongs to the HesB/IscA family.</text>
</comment>
<proteinExistence type="evidence at protein level"/>
<gene>
    <name type="primary">sufA</name>
    <name type="synonym">ydiC</name>
    <name type="ordered locus">b1684</name>
    <name type="ordered locus">JW1674</name>
</gene>
<protein>
    <recommendedName>
        <fullName evidence="7">Iron-sulfur cluster assembly protein SufA</fullName>
    </recommendedName>
</protein>
<dbReference type="EMBL" id="U00096">
    <property type="protein sequence ID" value="AAC74754.1"/>
    <property type="molecule type" value="Genomic_DNA"/>
</dbReference>
<dbReference type="EMBL" id="AP009048">
    <property type="protein sequence ID" value="BAA15453.1"/>
    <property type="molecule type" value="Genomic_DNA"/>
</dbReference>
<dbReference type="PIR" id="D64926">
    <property type="entry name" value="D64926"/>
</dbReference>
<dbReference type="RefSeq" id="NP_416199.1">
    <property type="nucleotide sequence ID" value="NC_000913.3"/>
</dbReference>
<dbReference type="RefSeq" id="WP_000367160.1">
    <property type="nucleotide sequence ID" value="NZ_STEB01000003.1"/>
</dbReference>
<dbReference type="PDB" id="2D2A">
    <property type="method" value="X-ray"/>
    <property type="resolution" value="2.70 A"/>
    <property type="chains" value="A/B=1-122"/>
</dbReference>
<dbReference type="PDBsum" id="2D2A"/>
<dbReference type="BMRB" id="P77667"/>
<dbReference type="SMR" id="P77667"/>
<dbReference type="BioGRID" id="4260283">
    <property type="interactions" value="52"/>
</dbReference>
<dbReference type="ComplexPortal" id="CPX-2142">
    <property type="entry name" value="sufA complex"/>
</dbReference>
<dbReference type="FunCoup" id="P77667">
    <property type="interactions" value="497"/>
</dbReference>
<dbReference type="IntAct" id="P77667">
    <property type="interactions" value="8"/>
</dbReference>
<dbReference type="STRING" id="511145.b1684"/>
<dbReference type="jPOST" id="P77667"/>
<dbReference type="PaxDb" id="511145-b1684"/>
<dbReference type="EnsemblBacteria" id="AAC74754">
    <property type="protein sequence ID" value="AAC74754"/>
    <property type="gene ID" value="b1684"/>
</dbReference>
<dbReference type="GeneID" id="93775839"/>
<dbReference type="GeneID" id="949014"/>
<dbReference type="KEGG" id="ecj:JW1674"/>
<dbReference type="KEGG" id="eco:b1684"/>
<dbReference type="KEGG" id="ecoc:C3026_09645"/>
<dbReference type="PATRIC" id="fig|1411691.4.peg.574"/>
<dbReference type="EchoBASE" id="EB1352"/>
<dbReference type="eggNOG" id="COG0316">
    <property type="taxonomic scope" value="Bacteria"/>
</dbReference>
<dbReference type="HOGENOM" id="CLU_069054_4_2_6"/>
<dbReference type="InParanoid" id="P77667"/>
<dbReference type="OMA" id="DFAWRGL"/>
<dbReference type="OrthoDB" id="9801228at2"/>
<dbReference type="PhylomeDB" id="P77667"/>
<dbReference type="BioCyc" id="EcoCyc:EG11378-MONOMER"/>
<dbReference type="EvolutionaryTrace" id="P77667"/>
<dbReference type="PRO" id="PR:P77667"/>
<dbReference type="Proteomes" id="UP000000625">
    <property type="component" value="Chromosome"/>
</dbReference>
<dbReference type="GO" id="GO:0005737">
    <property type="term" value="C:cytoplasm"/>
    <property type="evidence" value="ECO:0000318"/>
    <property type="project" value="GO_Central"/>
</dbReference>
<dbReference type="GO" id="GO:0005829">
    <property type="term" value="C:cytosol"/>
    <property type="evidence" value="ECO:0000318"/>
    <property type="project" value="GO_Central"/>
</dbReference>
<dbReference type="GO" id="GO:1990230">
    <property type="term" value="C:iron-sulfur cluster transfer complex"/>
    <property type="evidence" value="ECO:0000353"/>
    <property type="project" value="ComplexPortal"/>
</dbReference>
<dbReference type="GO" id="GO:0051537">
    <property type="term" value="F:2 iron, 2 sulfur cluster binding"/>
    <property type="evidence" value="ECO:0000314"/>
    <property type="project" value="EcoCyc"/>
</dbReference>
<dbReference type="GO" id="GO:0051539">
    <property type="term" value="F:4 iron, 4 sulfur cluster binding"/>
    <property type="evidence" value="ECO:0007669"/>
    <property type="project" value="UniProtKB-KW"/>
</dbReference>
<dbReference type="GO" id="GO:0046872">
    <property type="term" value="F:metal ion binding"/>
    <property type="evidence" value="ECO:0007669"/>
    <property type="project" value="UniProtKB-KW"/>
</dbReference>
<dbReference type="GO" id="GO:0042803">
    <property type="term" value="F:protein homodimerization activity"/>
    <property type="evidence" value="ECO:0000314"/>
    <property type="project" value="EcoCyc"/>
</dbReference>
<dbReference type="GO" id="GO:0016226">
    <property type="term" value="P:iron-sulfur cluster assembly"/>
    <property type="evidence" value="ECO:0000315"/>
    <property type="project" value="EcoCyc"/>
</dbReference>
<dbReference type="GO" id="GO:0006979">
    <property type="term" value="P:response to oxidative stress"/>
    <property type="evidence" value="ECO:0000315"/>
    <property type="project" value="EcoCyc"/>
</dbReference>
<dbReference type="FunFam" id="2.60.300.12:FF:000005">
    <property type="entry name" value="Fe-S cluster assembly scaffold SufA"/>
    <property type="match status" value="1"/>
</dbReference>
<dbReference type="Gene3D" id="2.60.300.12">
    <property type="entry name" value="HesB-like domain"/>
    <property type="match status" value="1"/>
</dbReference>
<dbReference type="InterPro" id="IPR050322">
    <property type="entry name" value="Fe-S_cluster_asmbl/transfer"/>
</dbReference>
<dbReference type="InterPro" id="IPR000361">
    <property type="entry name" value="FeS_biogenesis"/>
</dbReference>
<dbReference type="InterPro" id="IPR016092">
    <property type="entry name" value="FeS_cluster_insertion"/>
</dbReference>
<dbReference type="InterPro" id="IPR017870">
    <property type="entry name" value="FeS_cluster_insertion_CS"/>
</dbReference>
<dbReference type="InterPro" id="IPR035903">
    <property type="entry name" value="HesB-like_dom_sf"/>
</dbReference>
<dbReference type="InterPro" id="IPR011298">
    <property type="entry name" value="SufA_proteobacteria"/>
</dbReference>
<dbReference type="NCBIfam" id="TIGR00049">
    <property type="entry name" value="iron-sulfur cluster assembly accessory protein"/>
    <property type="match status" value="1"/>
</dbReference>
<dbReference type="NCBIfam" id="NF007050">
    <property type="entry name" value="PRK09504.1"/>
    <property type="match status" value="1"/>
</dbReference>
<dbReference type="NCBIfam" id="TIGR01997">
    <property type="entry name" value="sufA_proteo"/>
    <property type="match status" value="1"/>
</dbReference>
<dbReference type="PANTHER" id="PTHR10072">
    <property type="entry name" value="IRON-SULFUR CLUSTER ASSEMBLY PROTEIN"/>
    <property type="match status" value="1"/>
</dbReference>
<dbReference type="PANTHER" id="PTHR10072:SF47">
    <property type="entry name" value="PROTEIN SUFA"/>
    <property type="match status" value="1"/>
</dbReference>
<dbReference type="Pfam" id="PF01521">
    <property type="entry name" value="Fe-S_biosyn"/>
    <property type="match status" value="1"/>
</dbReference>
<dbReference type="SUPFAM" id="SSF89360">
    <property type="entry name" value="HesB-like domain"/>
    <property type="match status" value="1"/>
</dbReference>
<dbReference type="PROSITE" id="PS01152">
    <property type="entry name" value="HESB"/>
    <property type="match status" value="1"/>
</dbReference>